<reference key="1">
    <citation type="journal article" date="2006" name="Nat. Biotechnol.">
        <title>Complete genome of the mutualistic, N2-fixing grass endophyte Azoarcus sp. strain BH72.</title>
        <authorList>
            <person name="Krause A."/>
            <person name="Ramakumar A."/>
            <person name="Bartels D."/>
            <person name="Battistoni F."/>
            <person name="Bekel T."/>
            <person name="Boch J."/>
            <person name="Boehm M."/>
            <person name="Friedrich F."/>
            <person name="Hurek T."/>
            <person name="Krause L."/>
            <person name="Linke B."/>
            <person name="McHardy A.C."/>
            <person name="Sarkar A."/>
            <person name="Schneiker S."/>
            <person name="Syed A.A."/>
            <person name="Thauer R."/>
            <person name="Vorhoelter F.-J."/>
            <person name="Weidner S."/>
            <person name="Puehler A."/>
            <person name="Reinhold-Hurek B."/>
            <person name="Kaiser O."/>
            <person name="Goesmann A."/>
        </authorList>
    </citation>
    <scope>NUCLEOTIDE SEQUENCE [LARGE SCALE GENOMIC DNA]</scope>
    <source>
        <strain>BH72</strain>
    </source>
</reference>
<feature type="chain" id="PRO_1000049633" description="Large ribosomal subunit protein bL19">
    <location>
        <begin position="1"/>
        <end position="128"/>
    </location>
</feature>
<proteinExistence type="inferred from homology"/>
<comment type="function">
    <text evidence="1">This protein is located at the 30S-50S ribosomal subunit interface and may play a role in the structure and function of the aminoacyl-tRNA binding site.</text>
</comment>
<comment type="similarity">
    <text evidence="1">Belongs to the bacterial ribosomal protein bL19 family.</text>
</comment>
<organism>
    <name type="scientific">Azoarcus sp. (strain BH72)</name>
    <dbReference type="NCBI Taxonomy" id="418699"/>
    <lineage>
        <taxon>Bacteria</taxon>
        <taxon>Pseudomonadati</taxon>
        <taxon>Pseudomonadota</taxon>
        <taxon>Betaproteobacteria</taxon>
        <taxon>Rhodocyclales</taxon>
        <taxon>Zoogloeaceae</taxon>
        <taxon>Azoarcus</taxon>
    </lineage>
</organism>
<protein>
    <recommendedName>
        <fullName evidence="1">Large ribosomal subunit protein bL19</fullName>
    </recommendedName>
    <alternativeName>
        <fullName evidence="2">50S ribosomal protein L19</fullName>
    </alternativeName>
</protein>
<keyword id="KW-1185">Reference proteome</keyword>
<keyword id="KW-0687">Ribonucleoprotein</keyword>
<keyword id="KW-0689">Ribosomal protein</keyword>
<dbReference type="EMBL" id="AM406670">
    <property type="protein sequence ID" value="CAL95517.1"/>
    <property type="molecule type" value="Genomic_DNA"/>
</dbReference>
<dbReference type="RefSeq" id="WP_011766627.1">
    <property type="nucleotide sequence ID" value="NC_008702.1"/>
</dbReference>
<dbReference type="SMR" id="A1K9L2"/>
<dbReference type="STRING" id="62928.azo2901"/>
<dbReference type="KEGG" id="aoa:dqs_3041"/>
<dbReference type="KEGG" id="azo:azo2901"/>
<dbReference type="eggNOG" id="COG0335">
    <property type="taxonomic scope" value="Bacteria"/>
</dbReference>
<dbReference type="HOGENOM" id="CLU_103507_1_0_4"/>
<dbReference type="OrthoDB" id="9803541at2"/>
<dbReference type="Proteomes" id="UP000002588">
    <property type="component" value="Chromosome"/>
</dbReference>
<dbReference type="GO" id="GO:0022625">
    <property type="term" value="C:cytosolic large ribosomal subunit"/>
    <property type="evidence" value="ECO:0007669"/>
    <property type="project" value="TreeGrafter"/>
</dbReference>
<dbReference type="GO" id="GO:0003735">
    <property type="term" value="F:structural constituent of ribosome"/>
    <property type="evidence" value="ECO:0007669"/>
    <property type="project" value="InterPro"/>
</dbReference>
<dbReference type="GO" id="GO:0006412">
    <property type="term" value="P:translation"/>
    <property type="evidence" value="ECO:0007669"/>
    <property type="project" value="UniProtKB-UniRule"/>
</dbReference>
<dbReference type="FunFam" id="2.30.30.790:FF:000001">
    <property type="entry name" value="50S ribosomal protein L19"/>
    <property type="match status" value="1"/>
</dbReference>
<dbReference type="Gene3D" id="2.30.30.790">
    <property type="match status" value="1"/>
</dbReference>
<dbReference type="HAMAP" id="MF_00402">
    <property type="entry name" value="Ribosomal_bL19"/>
    <property type="match status" value="1"/>
</dbReference>
<dbReference type="InterPro" id="IPR001857">
    <property type="entry name" value="Ribosomal_bL19"/>
</dbReference>
<dbReference type="InterPro" id="IPR018257">
    <property type="entry name" value="Ribosomal_bL19_CS"/>
</dbReference>
<dbReference type="InterPro" id="IPR038657">
    <property type="entry name" value="Ribosomal_bL19_sf"/>
</dbReference>
<dbReference type="InterPro" id="IPR008991">
    <property type="entry name" value="Translation_prot_SH3-like_sf"/>
</dbReference>
<dbReference type="NCBIfam" id="TIGR01024">
    <property type="entry name" value="rplS_bact"/>
    <property type="match status" value="1"/>
</dbReference>
<dbReference type="PANTHER" id="PTHR15680:SF9">
    <property type="entry name" value="LARGE RIBOSOMAL SUBUNIT PROTEIN BL19M"/>
    <property type="match status" value="1"/>
</dbReference>
<dbReference type="PANTHER" id="PTHR15680">
    <property type="entry name" value="RIBOSOMAL PROTEIN L19"/>
    <property type="match status" value="1"/>
</dbReference>
<dbReference type="Pfam" id="PF01245">
    <property type="entry name" value="Ribosomal_L19"/>
    <property type="match status" value="1"/>
</dbReference>
<dbReference type="PIRSF" id="PIRSF002191">
    <property type="entry name" value="Ribosomal_L19"/>
    <property type="match status" value="1"/>
</dbReference>
<dbReference type="PRINTS" id="PR00061">
    <property type="entry name" value="RIBOSOMALL19"/>
</dbReference>
<dbReference type="SUPFAM" id="SSF50104">
    <property type="entry name" value="Translation proteins SH3-like domain"/>
    <property type="match status" value="1"/>
</dbReference>
<dbReference type="PROSITE" id="PS01015">
    <property type="entry name" value="RIBOSOMAL_L19"/>
    <property type="match status" value="1"/>
</dbReference>
<name>RL19_AZOSB</name>
<sequence>MNLIQLLEQEEIARLTAGKTIPAFAPGDTVVVQVKVKEGNRERLQAYEGVVIAKRNRGLNSSFIVRKISSGEGVERTFQTYSPLVATIEVKRRGDVRRAKLYYLRQRSGKSARIKEKLDYKSAAGKKA</sequence>
<accession>A1K9L2</accession>
<gene>
    <name evidence="1" type="primary">rplS</name>
    <name type="ordered locus">azo2901</name>
</gene>
<evidence type="ECO:0000255" key="1">
    <source>
        <dbReference type="HAMAP-Rule" id="MF_00402"/>
    </source>
</evidence>
<evidence type="ECO:0000305" key="2"/>